<gene>
    <name evidence="1" type="primary">recU</name>
    <name type="ordered locus">SPN23F03420</name>
</gene>
<feature type="chain" id="PRO_1000193443" description="Holliday junction resolvase RecU">
    <location>
        <begin position="1"/>
        <end position="198"/>
    </location>
</feature>
<feature type="region of interest" description="Disordered" evidence="2">
    <location>
        <begin position="1"/>
        <end position="21"/>
    </location>
</feature>
<feature type="compositionally biased region" description="Polar residues" evidence="2">
    <location>
        <begin position="11"/>
        <end position="21"/>
    </location>
</feature>
<feature type="binding site" evidence="1">
    <location>
        <position position="81"/>
    </location>
    <ligand>
        <name>Mg(2+)</name>
        <dbReference type="ChEBI" id="CHEBI:18420"/>
    </ligand>
</feature>
<feature type="binding site" evidence="1">
    <location>
        <position position="83"/>
    </location>
    <ligand>
        <name>Mg(2+)</name>
        <dbReference type="ChEBI" id="CHEBI:18420"/>
    </ligand>
</feature>
<feature type="binding site" evidence="1">
    <location>
        <position position="96"/>
    </location>
    <ligand>
        <name>Mg(2+)</name>
        <dbReference type="ChEBI" id="CHEBI:18420"/>
    </ligand>
</feature>
<feature type="binding site" evidence="1">
    <location>
        <position position="115"/>
    </location>
    <ligand>
        <name>Mg(2+)</name>
        <dbReference type="ChEBI" id="CHEBI:18420"/>
    </ligand>
</feature>
<feature type="site" description="Transition state stabilizer" evidence="1">
    <location>
        <position position="98"/>
    </location>
</feature>
<protein>
    <recommendedName>
        <fullName evidence="1">Holliday junction resolvase RecU</fullName>
        <ecNumber evidence="1">3.1.21.10</ecNumber>
    </recommendedName>
    <alternativeName>
        <fullName evidence="1">Recombination protein U homolog</fullName>
    </alternativeName>
</protein>
<sequence length="198" mass="23069">MVNYPHKLSSQKRQPSLSQPKNFANRGMSFEKMINATNDYYLSQGLAVIHKKPTPIQIVRVDYPQRSRAKIVEAYFRQASTTDYSGVYNGYYIDFEAKETKQKRAIPMKNFHPHQIQHMEQVLAQQGICFVLLHFSSQQETYLLPAFDLIRFYHQDKGQKSMPLGYIREYGYEIKAGAFPQIPYLNVIKEHLLGGKTR</sequence>
<keyword id="KW-0963">Cytoplasm</keyword>
<keyword id="KW-0227">DNA damage</keyword>
<keyword id="KW-0233">DNA recombination</keyword>
<keyword id="KW-0234">DNA repair</keyword>
<keyword id="KW-0255">Endonuclease</keyword>
<keyword id="KW-0378">Hydrolase</keyword>
<keyword id="KW-0460">Magnesium</keyword>
<keyword id="KW-0479">Metal-binding</keyword>
<keyword id="KW-0540">Nuclease</keyword>
<accession>B8ZL82</accession>
<organism>
    <name type="scientific">Streptococcus pneumoniae (strain ATCC 700669 / Spain 23F-1)</name>
    <dbReference type="NCBI Taxonomy" id="561276"/>
    <lineage>
        <taxon>Bacteria</taxon>
        <taxon>Bacillati</taxon>
        <taxon>Bacillota</taxon>
        <taxon>Bacilli</taxon>
        <taxon>Lactobacillales</taxon>
        <taxon>Streptococcaceae</taxon>
        <taxon>Streptococcus</taxon>
    </lineage>
</organism>
<name>RECU_STRPJ</name>
<comment type="function">
    <text evidence="1">Endonuclease that resolves Holliday junction intermediates in genetic recombination. Cleaves mobile four-strand junctions by introducing symmetrical nicks in paired strands. Promotes annealing of linear ssDNA with homologous dsDNA. Required for DNA repair, homologous recombination and chromosome segregation.</text>
</comment>
<comment type="catalytic activity">
    <reaction evidence="1">
        <text>Endonucleolytic cleavage at a junction such as a reciprocal single-stranded crossover between two homologous DNA duplexes (Holliday junction).</text>
        <dbReference type="EC" id="3.1.21.10"/>
    </reaction>
</comment>
<comment type="cofactor">
    <cofactor evidence="1">
        <name>Mg(2+)</name>
        <dbReference type="ChEBI" id="CHEBI:18420"/>
    </cofactor>
    <text evidence="1">Binds 1 Mg(2+) ion per subunit.</text>
</comment>
<comment type="subcellular location">
    <subcellularLocation>
        <location evidence="1">Cytoplasm</location>
    </subcellularLocation>
</comment>
<comment type="similarity">
    <text evidence="1">Belongs to the RecU family.</text>
</comment>
<reference key="1">
    <citation type="journal article" date="2009" name="J. Bacteriol.">
        <title>Role of conjugative elements in the evolution of the multidrug-resistant pandemic clone Streptococcus pneumoniae Spain23F ST81.</title>
        <authorList>
            <person name="Croucher N.J."/>
            <person name="Walker D."/>
            <person name="Romero P."/>
            <person name="Lennard N."/>
            <person name="Paterson G.K."/>
            <person name="Bason N.C."/>
            <person name="Mitchell A.M."/>
            <person name="Quail M.A."/>
            <person name="Andrew P.W."/>
            <person name="Parkhill J."/>
            <person name="Bentley S.D."/>
            <person name="Mitchell T.J."/>
        </authorList>
    </citation>
    <scope>NUCLEOTIDE SEQUENCE [LARGE SCALE GENOMIC DNA]</scope>
    <source>
        <strain>ATCC 700669 / Spain 23F-1</strain>
    </source>
</reference>
<proteinExistence type="inferred from homology"/>
<evidence type="ECO:0000255" key="1">
    <source>
        <dbReference type="HAMAP-Rule" id="MF_00130"/>
    </source>
</evidence>
<evidence type="ECO:0000256" key="2">
    <source>
        <dbReference type="SAM" id="MobiDB-lite"/>
    </source>
</evidence>
<dbReference type="EC" id="3.1.21.10" evidence="1"/>
<dbReference type="EMBL" id="FM211187">
    <property type="protein sequence ID" value="CAR68197.1"/>
    <property type="molecule type" value="Genomic_DNA"/>
</dbReference>
<dbReference type="RefSeq" id="WP_000248774.1">
    <property type="nucleotide sequence ID" value="NC_011900.1"/>
</dbReference>
<dbReference type="SMR" id="B8ZL82"/>
<dbReference type="GeneID" id="45217784"/>
<dbReference type="KEGG" id="sne:SPN23F03420"/>
<dbReference type="HOGENOM" id="CLU_096340_0_0_9"/>
<dbReference type="GO" id="GO:0005737">
    <property type="term" value="C:cytoplasm"/>
    <property type="evidence" value="ECO:0007669"/>
    <property type="project" value="UniProtKB-SubCell"/>
</dbReference>
<dbReference type="GO" id="GO:0004519">
    <property type="term" value="F:endonuclease activity"/>
    <property type="evidence" value="ECO:0007669"/>
    <property type="project" value="UniProtKB-UniRule"/>
</dbReference>
<dbReference type="GO" id="GO:0000287">
    <property type="term" value="F:magnesium ion binding"/>
    <property type="evidence" value="ECO:0007669"/>
    <property type="project" value="UniProtKB-UniRule"/>
</dbReference>
<dbReference type="GO" id="GO:0003676">
    <property type="term" value="F:nucleic acid binding"/>
    <property type="evidence" value="ECO:0007669"/>
    <property type="project" value="InterPro"/>
</dbReference>
<dbReference type="GO" id="GO:0007059">
    <property type="term" value="P:chromosome segregation"/>
    <property type="evidence" value="ECO:0007669"/>
    <property type="project" value="UniProtKB-UniRule"/>
</dbReference>
<dbReference type="GO" id="GO:0006310">
    <property type="term" value="P:DNA recombination"/>
    <property type="evidence" value="ECO:0007669"/>
    <property type="project" value="UniProtKB-UniRule"/>
</dbReference>
<dbReference type="GO" id="GO:0006281">
    <property type="term" value="P:DNA repair"/>
    <property type="evidence" value="ECO:0007669"/>
    <property type="project" value="UniProtKB-UniRule"/>
</dbReference>
<dbReference type="CDD" id="cd22354">
    <property type="entry name" value="RecU-like"/>
    <property type="match status" value="1"/>
</dbReference>
<dbReference type="Gene3D" id="3.40.1350.10">
    <property type="match status" value="1"/>
</dbReference>
<dbReference type="HAMAP" id="MF_00130">
    <property type="entry name" value="RecU"/>
    <property type="match status" value="1"/>
</dbReference>
<dbReference type="InterPro" id="IPR004612">
    <property type="entry name" value="Resolv_RecU"/>
</dbReference>
<dbReference type="InterPro" id="IPR011335">
    <property type="entry name" value="Restrct_endonuc-II-like"/>
</dbReference>
<dbReference type="InterPro" id="IPR011856">
    <property type="entry name" value="tRNA_endonuc-like_dom_sf"/>
</dbReference>
<dbReference type="NCBIfam" id="NF002580">
    <property type="entry name" value="PRK02234.1-1"/>
    <property type="match status" value="1"/>
</dbReference>
<dbReference type="NCBIfam" id="NF002584">
    <property type="entry name" value="PRK02234.1-5"/>
    <property type="match status" value="1"/>
</dbReference>
<dbReference type="NCBIfam" id="TIGR00648">
    <property type="entry name" value="recU"/>
    <property type="match status" value="1"/>
</dbReference>
<dbReference type="Pfam" id="PF03838">
    <property type="entry name" value="RecU"/>
    <property type="match status" value="1"/>
</dbReference>
<dbReference type="PIRSF" id="PIRSF037785">
    <property type="entry name" value="RecU"/>
    <property type="match status" value="1"/>
</dbReference>
<dbReference type="SUPFAM" id="SSF52980">
    <property type="entry name" value="Restriction endonuclease-like"/>
    <property type="match status" value="1"/>
</dbReference>